<evidence type="ECO:0000255" key="1">
    <source>
        <dbReference type="HAMAP-Rule" id="MF_01389"/>
    </source>
</evidence>
<protein>
    <recommendedName>
        <fullName evidence="1">Urease accessory protein UreG</fullName>
    </recommendedName>
</protein>
<gene>
    <name evidence="1" type="primary">ureG</name>
    <name type="ordered locus">Mflv_1684</name>
</gene>
<comment type="function">
    <text evidence="1">Facilitates the functional incorporation of the urease nickel metallocenter. This process requires GTP hydrolysis, probably effectuated by UreG.</text>
</comment>
<comment type="subunit">
    <text evidence="1">Homodimer. UreD, UreF and UreG form a complex that acts as a GTP-hydrolysis-dependent molecular chaperone, activating the urease apoprotein by helping to assemble the nickel containing metallocenter of UreC. The UreE protein probably delivers the nickel.</text>
</comment>
<comment type="subcellular location">
    <subcellularLocation>
        <location evidence="1">Cytoplasm</location>
    </subcellularLocation>
</comment>
<comment type="similarity">
    <text evidence="1">Belongs to the SIMIBI class G3E GTPase family. UreG subfamily.</text>
</comment>
<name>UREG_MYCGI</name>
<dbReference type="EMBL" id="CP000656">
    <property type="protein sequence ID" value="ABP44166.1"/>
    <property type="molecule type" value="Genomic_DNA"/>
</dbReference>
<dbReference type="SMR" id="A4T7D7"/>
<dbReference type="STRING" id="350054.Mflv_1684"/>
<dbReference type="KEGG" id="mgi:Mflv_1684"/>
<dbReference type="eggNOG" id="COG0378">
    <property type="taxonomic scope" value="Bacteria"/>
</dbReference>
<dbReference type="HOGENOM" id="CLU_072144_1_0_11"/>
<dbReference type="OrthoDB" id="9802035at2"/>
<dbReference type="GO" id="GO:0005737">
    <property type="term" value="C:cytoplasm"/>
    <property type="evidence" value="ECO:0007669"/>
    <property type="project" value="UniProtKB-SubCell"/>
</dbReference>
<dbReference type="GO" id="GO:0005525">
    <property type="term" value="F:GTP binding"/>
    <property type="evidence" value="ECO:0007669"/>
    <property type="project" value="UniProtKB-KW"/>
</dbReference>
<dbReference type="GO" id="GO:0003924">
    <property type="term" value="F:GTPase activity"/>
    <property type="evidence" value="ECO:0007669"/>
    <property type="project" value="InterPro"/>
</dbReference>
<dbReference type="GO" id="GO:0016151">
    <property type="term" value="F:nickel cation binding"/>
    <property type="evidence" value="ECO:0007669"/>
    <property type="project" value="UniProtKB-UniRule"/>
</dbReference>
<dbReference type="GO" id="GO:0043419">
    <property type="term" value="P:urea catabolic process"/>
    <property type="evidence" value="ECO:0007669"/>
    <property type="project" value="InterPro"/>
</dbReference>
<dbReference type="Gene3D" id="3.40.50.300">
    <property type="entry name" value="P-loop containing nucleotide triphosphate hydrolases"/>
    <property type="match status" value="1"/>
</dbReference>
<dbReference type="HAMAP" id="MF_01389">
    <property type="entry name" value="UreG"/>
    <property type="match status" value="1"/>
</dbReference>
<dbReference type="InterPro" id="IPR003495">
    <property type="entry name" value="CobW/HypB/UreG_nucleotide-bd"/>
</dbReference>
<dbReference type="InterPro" id="IPR027417">
    <property type="entry name" value="P-loop_NTPase"/>
</dbReference>
<dbReference type="InterPro" id="IPR004400">
    <property type="entry name" value="UreG"/>
</dbReference>
<dbReference type="NCBIfam" id="TIGR00101">
    <property type="entry name" value="ureG"/>
    <property type="match status" value="1"/>
</dbReference>
<dbReference type="PANTHER" id="PTHR31715">
    <property type="entry name" value="UREASE ACCESSORY PROTEIN G"/>
    <property type="match status" value="1"/>
</dbReference>
<dbReference type="PANTHER" id="PTHR31715:SF0">
    <property type="entry name" value="UREASE ACCESSORY PROTEIN G"/>
    <property type="match status" value="1"/>
</dbReference>
<dbReference type="Pfam" id="PF02492">
    <property type="entry name" value="cobW"/>
    <property type="match status" value="1"/>
</dbReference>
<dbReference type="PIRSF" id="PIRSF005624">
    <property type="entry name" value="Ni-bind_GTPase"/>
    <property type="match status" value="1"/>
</dbReference>
<dbReference type="SUPFAM" id="SSF52540">
    <property type="entry name" value="P-loop containing nucleoside triphosphate hydrolases"/>
    <property type="match status" value="1"/>
</dbReference>
<proteinExistence type="inferred from homology"/>
<feature type="chain" id="PRO_0000347409" description="Urease accessory protein UreG">
    <location>
        <begin position="1"/>
        <end position="206"/>
    </location>
</feature>
<feature type="binding site" evidence="1">
    <location>
        <begin position="11"/>
        <end position="18"/>
    </location>
    <ligand>
        <name>GTP</name>
        <dbReference type="ChEBI" id="CHEBI:37565"/>
    </ligand>
</feature>
<keyword id="KW-0143">Chaperone</keyword>
<keyword id="KW-0963">Cytoplasm</keyword>
<keyword id="KW-0342">GTP-binding</keyword>
<keyword id="KW-0996">Nickel insertion</keyword>
<keyword id="KW-0547">Nucleotide-binding</keyword>
<organism>
    <name type="scientific">Mycolicibacterium gilvum (strain PYR-GCK)</name>
    <name type="common">Mycobacterium gilvum (strain PYR-GCK)</name>
    <dbReference type="NCBI Taxonomy" id="350054"/>
    <lineage>
        <taxon>Bacteria</taxon>
        <taxon>Bacillati</taxon>
        <taxon>Actinomycetota</taxon>
        <taxon>Actinomycetes</taxon>
        <taxon>Mycobacteriales</taxon>
        <taxon>Mycobacteriaceae</taxon>
        <taxon>Mycolicibacterium</taxon>
    </lineage>
</organism>
<reference key="1">
    <citation type="submission" date="2007-04" db="EMBL/GenBank/DDBJ databases">
        <title>Complete sequence of chromosome of Mycobacterium gilvum PYR-GCK.</title>
        <authorList>
            <consortium name="US DOE Joint Genome Institute"/>
            <person name="Copeland A."/>
            <person name="Lucas S."/>
            <person name="Lapidus A."/>
            <person name="Barry K."/>
            <person name="Detter J.C."/>
            <person name="Glavina del Rio T."/>
            <person name="Hammon N."/>
            <person name="Israni S."/>
            <person name="Dalin E."/>
            <person name="Tice H."/>
            <person name="Pitluck S."/>
            <person name="Chain P."/>
            <person name="Malfatti S."/>
            <person name="Shin M."/>
            <person name="Vergez L."/>
            <person name="Schmutz J."/>
            <person name="Larimer F."/>
            <person name="Land M."/>
            <person name="Hauser L."/>
            <person name="Kyrpides N."/>
            <person name="Mikhailova N."/>
            <person name="Miller C."/>
            <person name="Richardson P."/>
        </authorList>
    </citation>
    <scope>NUCLEOTIDE SEQUENCE [LARGE SCALE GENOMIC DNA]</scope>
    <source>
        <strain>PYR-GCK</strain>
    </source>
</reference>
<accession>A4T7D7</accession>
<sequence>MIEAIRIGIGGPVGSGKTRLVETLVPRLSAAGLSVAVITNDLVTDEDAQRVRRSGVIDPERVLAVETGACPHTAIREDPSANLAAAERLNRRFGDLDVILIESGGDNLAATFTSDLVDYWIFVIDTAAGDDIPRKKGIGLLQADLLVVNKIDLAALVGADLDMMRRDCAIARPVKPTVFTDLKSGHGLIELTERLIDGAMLGVGVP</sequence>